<reference key="1">
    <citation type="journal article" date="1999" name="Nature">
        <title>Sequence and analysis of chromosome 2 of the plant Arabidopsis thaliana.</title>
        <authorList>
            <person name="Lin X."/>
            <person name="Kaul S."/>
            <person name="Rounsley S.D."/>
            <person name="Shea T.P."/>
            <person name="Benito M.-I."/>
            <person name="Town C.D."/>
            <person name="Fujii C.Y."/>
            <person name="Mason T.M."/>
            <person name="Bowman C.L."/>
            <person name="Barnstead M.E."/>
            <person name="Feldblyum T.V."/>
            <person name="Buell C.R."/>
            <person name="Ketchum K.A."/>
            <person name="Lee J.J."/>
            <person name="Ronning C.M."/>
            <person name="Koo H.L."/>
            <person name="Moffat K.S."/>
            <person name="Cronin L.A."/>
            <person name="Shen M."/>
            <person name="Pai G."/>
            <person name="Van Aken S."/>
            <person name="Umayam L."/>
            <person name="Tallon L.J."/>
            <person name="Gill J.E."/>
            <person name="Adams M.D."/>
            <person name="Carrera A.J."/>
            <person name="Creasy T.H."/>
            <person name="Goodman H.M."/>
            <person name="Somerville C.R."/>
            <person name="Copenhaver G.P."/>
            <person name="Preuss D."/>
            <person name="Nierman W.C."/>
            <person name="White O."/>
            <person name="Eisen J.A."/>
            <person name="Salzberg S.L."/>
            <person name="Fraser C.M."/>
            <person name="Venter J.C."/>
        </authorList>
    </citation>
    <scope>NUCLEOTIDE SEQUENCE [LARGE SCALE GENOMIC DNA]</scope>
    <source>
        <strain>cv. Columbia</strain>
    </source>
</reference>
<reference key="2">
    <citation type="journal article" date="2017" name="Plant J.">
        <title>Araport11: a complete reannotation of the Arabidopsis thaliana reference genome.</title>
        <authorList>
            <person name="Cheng C.Y."/>
            <person name="Krishnakumar V."/>
            <person name="Chan A.P."/>
            <person name="Thibaud-Nissen F."/>
            <person name="Schobel S."/>
            <person name="Town C.D."/>
        </authorList>
    </citation>
    <scope>GENOME REANNOTATION</scope>
    <source>
        <strain>cv. Columbia</strain>
    </source>
</reference>
<reference key="3">
    <citation type="submission" date="2006-07" db="EMBL/GenBank/DDBJ databases">
        <title>Large-scale analysis of RIKEN Arabidopsis full-length (RAFL) cDNAs.</title>
        <authorList>
            <person name="Totoki Y."/>
            <person name="Seki M."/>
            <person name="Ishida J."/>
            <person name="Nakajima M."/>
            <person name="Enju A."/>
            <person name="Kamiya A."/>
            <person name="Narusaka M."/>
            <person name="Shin-i T."/>
            <person name="Nakagawa M."/>
            <person name="Sakamoto N."/>
            <person name="Oishi K."/>
            <person name="Kohara Y."/>
            <person name="Kobayashi M."/>
            <person name="Toyoda A."/>
            <person name="Sakaki Y."/>
            <person name="Sakurai T."/>
            <person name="Iida K."/>
            <person name="Akiyama K."/>
            <person name="Satou M."/>
            <person name="Toyoda T."/>
            <person name="Konagaya A."/>
            <person name="Carninci P."/>
            <person name="Kawai J."/>
            <person name="Hayashizaki Y."/>
            <person name="Shinozaki K."/>
        </authorList>
    </citation>
    <scope>NUCLEOTIDE SEQUENCE [LARGE SCALE MRNA]</scope>
    <source>
        <strain>cv. Columbia</strain>
    </source>
</reference>
<dbReference type="EMBL" id="AC002409">
    <property type="protein sequence ID" value="AAB86450.1"/>
    <property type="status" value="ALT_SEQ"/>
    <property type="molecule type" value="Genomic_DNA"/>
</dbReference>
<dbReference type="EMBL" id="CP002685">
    <property type="protein sequence ID" value="AEC09894.1"/>
    <property type="molecule type" value="Genomic_DNA"/>
</dbReference>
<dbReference type="EMBL" id="AK226262">
    <property type="status" value="NOT_ANNOTATED_CDS"/>
    <property type="molecule type" value="mRNA"/>
</dbReference>
<dbReference type="PIR" id="T00754">
    <property type="entry name" value="T00754"/>
</dbReference>
<dbReference type="RefSeq" id="NP_181622.2">
    <property type="nucleotide sequence ID" value="NM_129653.5"/>
</dbReference>
<dbReference type="SMR" id="F4IJ08"/>
<dbReference type="BioGRID" id="4024">
    <property type="interactions" value="3"/>
</dbReference>
<dbReference type="FunCoup" id="F4IJ08">
    <property type="interactions" value="1"/>
</dbReference>
<dbReference type="IntAct" id="F4IJ08">
    <property type="interactions" value="3"/>
</dbReference>
<dbReference type="STRING" id="3702.F4IJ08"/>
<dbReference type="PaxDb" id="3702-AT2G40900.1"/>
<dbReference type="ProteomicsDB" id="243025"/>
<dbReference type="EnsemblPlants" id="AT2G40900.1">
    <property type="protein sequence ID" value="AT2G40900.1"/>
    <property type="gene ID" value="AT2G40900"/>
</dbReference>
<dbReference type="GeneID" id="818687"/>
<dbReference type="Gramene" id="AT2G40900.1">
    <property type="protein sequence ID" value="AT2G40900.1"/>
    <property type="gene ID" value="AT2G40900"/>
</dbReference>
<dbReference type="KEGG" id="ath:AT2G40900"/>
<dbReference type="Araport" id="AT2G40900"/>
<dbReference type="TAIR" id="AT2G40900">
    <property type="gene designation" value="UMAMIT11"/>
</dbReference>
<dbReference type="eggNOG" id="ENOG502QRHH">
    <property type="taxonomic scope" value="Eukaryota"/>
</dbReference>
<dbReference type="HOGENOM" id="CLU_025359_1_1_1"/>
<dbReference type="InParanoid" id="F4IJ08"/>
<dbReference type="OMA" id="KCCSRNS"/>
<dbReference type="OrthoDB" id="1100089at2759"/>
<dbReference type="PRO" id="PR:F4IJ08"/>
<dbReference type="Proteomes" id="UP000006548">
    <property type="component" value="Chromosome 2"/>
</dbReference>
<dbReference type="ExpressionAtlas" id="F4IJ08">
    <property type="expression patterns" value="baseline and differential"/>
</dbReference>
<dbReference type="GO" id="GO:0005886">
    <property type="term" value="C:plasma membrane"/>
    <property type="evidence" value="ECO:0000314"/>
    <property type="project" value="TAIR"/>
</dbReference>
<dbReference type="GO" id="GO:0015186">
    <property type="term" value="F:L-glutamine transmembrane transporter activity"/>
    <property type="evidence" value="ECO:0000314"/>
    <property type="project" value="TAIR"/>
</dbReference>
<dbReference type="GO" id="GO:0048316">
    <property type="term" value="P:seed development"/>
    <property type="evidence" value="ECO:0000315"/>
    <property type="project" value="TAIR"/>
</dbReference>
<dbReference type="InterPro" id="IPR000620">
    <property type="entry name" value="EamA_dom"/>
</dbReference>
<dbReference type="InterPro" id="IPR030184">
    <property type="entry name" value="WAT1-related"/>
</dbReference>
<dbReference type="PANTHER" id="PTHR31218">
    <property type="entry name" value="WAT1-RELATED PROTEIN"/>
    <property type="match status" value="1"/>
</dbReference>
<dbReference type="Pfam" id="PF00892">
    <property type="entry name" value="EamA"/>
    <property type="match status" value="2"/>
</dbReference>
<dbReference type="SUPFAM" id="SSF103481">
    <property type="entry name" value="Multidrug resistance efflux transporter EmrE"/>
    <property type="match status" value="2"/>
</dbReference>
<evidence type="ECO:0000250" key="1"/>
<evidence type="ECO:0000255" key="2"/>
<evidence type="ECO:0000305" key="3"/>
<sequence>MGLRMSESAKPYFAMVCLQFGYAGMNLVTKTVLDRGMSHYVLVAYRNAFATAAIAPFALLSERKVRSKMTFPIFMRIFLLALLGPVIDQNLYYIGLKLTSPTFSSAVSNIVPAITIILATLFRMEKVEMRKVRCLVKVMGTLVTVVGSILMIFYKGPFINFFRSHLTAASSPPTADYLKAAVFLLLASLSWASFFVLQAATLKKYSAHLSMSTMVCFMGTLQSLALAFVMEHNPSALNIGFDMNLLASAYAGIMSSSIAYYVQGLMMQRKGPVFVTAFNPLIVVIVSIMSFFVLGQGIYLGGVIGVVVLMVGVYAVLWGKHVDDDGEETRHEDNVVAVKCCSGNNGLTIMPKIDEADEEDVETGKATSEKESSVPEVVVVVFCSENVHSVSRPN</sequence>
<accession>F4IJ08</accession>
<accession>O22204</accession>
<proteinExistence type="evidence at transcript level"/>
<protein>
    <recommendedName>
        <fullName>WAT1-related protein At2g40900</fullName>
    </recommendedName>
</protein>
<keyword id="KW-0472">Membrane</keyword>
<keyword id="KW-1185">Reference proteome</keyword>
<keyword id="KW-0677">Repeat</keyword>
<keyword id="KW-0812">Transmembrane</keyword>
<keyword id="KW-1133">Transmembrane helix</keyword>
<organism>
    <name type="scientific">Arabidopsis thaliana</name>
    <name type="common">Mouse-ear cress</name>
    <dbReference type="NCBI Taxonomy" id="3702"/>
    <lineage>
        <taxon>Eukaryota</taxon>
        <taxon>Viridiplantae</taxon>
        <taxon>Streptophyta</taxon>
        <taxon>Embryophyta</taxon>
        <taxon>Tracheophyta</taxon>
        <taxon>Spermatophyta</taxon>
        <taxon>Magnoliopsida</taxon>
        <taxon>eudicotyledons</taxon>
        <taxon>Gunneridae</taxon>
        <taxon>Pentapetalae</taxon>
        <taxon>rosids</taxon>
        <taxon>malvids</taxon>
        <taxon>Brassicales</taxon>
        <taxon>Brassicaceae</taxon>
        <taxon>Camelineae</taxon>
        <taxon>Arabidopsis</taxon>
    </lineage>
</organism>
<comment type="subcellular location">
    <subcellularLocation>
        <location evidence="1">Membrane</location>
        <topology evidence="3">Multi-pass membrane protein</topology>
    </subcellularLocation>
</comment>
<comment type="similarity">
    <text evidence="3">Belongs to the drug/metabolite transporter (DMT) superfamily. Plant drug/metabolite exporter (P-DME) (TC 2.A.7.4) family.</text>
</comment>
<comment type="sequence caution" evidence="3">
    <conflict type="erroneous gene model prediction">
        <sequence resource="EMBL-CDS" id="AAB86450"/>
    </conflict>
</comment>
<gene>
    <name type="ordered locus">At2g40900</name>
    <name type="ORF">T20B5.10</name>
</gene>
<feature type="chain" id="PRO_0000421323" description="WAT1-related protein At2g40900">
    <location>
        <begin position="1"/>
        <end position="394"/>
    </location>
</feature>
<feature type="transmembrane region" description="Helical" evidence="2">
    <location>
        <begin position="13"/>
        <end position="33"/>
    </location>
</feature>
<feature type="transmembrane region" description="Helical" evidence="2">
    <location>
        <begin position="40"/>
        <end position="60"/>
    </location>
</feature>
<feature type="transmembrane region" description="Helical" evidence="2">
    <location>
        <begin position="67"/>
        <end position="87"/>
    </location>
</feature>
<feature type="transmembrane region" description="Helical" evidence="2">
    <location>
        <begin position="102"/>
        <end position="122"/>
    </location>
</feature>
<feature type="transmembrane region" description="Helical" evidence="2">
    <location>
        <begin position="142"/>
        <end position="162"/>
    </location>
</feature>
<feature type="transmembrane region" description="Helical" evidence="2">
    <location>
        <begin position="180"/>
        <end position="200"/>
    </location>
</feature>
<feature type="transmembrane region" description="Helical" evidence="2">
    <location>
        <begin position="209"/>
        <end position="229"/>
    </location>
</feature>
<feature type="transmembrane region" description="Helical" evidence="2">
    <location>
        <begin position="245"/>
        <end position="265"/>
    </location>
</feature>
<feature type="transmembrane region" description="Helical" evidence="2">
    <location>
        <begin position="273"/>
        <end position="293"/>
    </location>
</feature>
<feature type="transmembrane region" description="Helical" evidence="2">
    <location>
        <begin position="298"/>
        <end position="318"/>
    </location>
</feature>
<feature type="domain" description="EamA 1">
    <location>
        <begin position="22"/>
        <end position="147"/>
    </location>
</feature>
<feature type="domain" description="EamA 2">
    <location>
        <begin position="189"/>
        <end position="317"/>
    </location>
</feature>
<name>WTR15_ARATH</name>